<sequence>DDSMEEVVTVFIRTGSSLKA</sequence>
<reference key="1">
    <citation type="journal article" date="2002" name="Plant Physiol.">
        <title>Spermidine-binding proteins. Purification and expression analysis in maize.</title>
        <authorList>
            <person name="Tassoni A."/>
            <person name="Napier R.M."/>
            <person name="Franceschetti M."/>
            <person name="Venis M.A."/>
            <person name="Bagni N."/>
        </authorList>
    </citation>
    <scope>PROTEIN SEQUENCE</scope>
    <scope>SUBCELLULAR LOCATION</scope>
    <source>
        <strain>cv. Cecilia</strain>
        <tissue>Coleoptile</tissue>
    </source>
</reference>
<proteinExistence type="evidence at protein level"/>
<name>SB18_MAIZE</name>
<evidence type="ECO:0000269" key="1">
    <source>
    </source>
</evidence>
<evidence type="ECO:0000305" key="2"/>
<dbReference type="InParanoid" id="P82867"/>
<dbReference type="Proteomes" id="UP000007305">
    <property type="component" value="Unplaced"/>
</dbReference>
<dbReference type="GO" id="GO:0005789">
    <property type="term" value="C:endoplasmic reticulum membrane"/>
    <property type="evidence" value="ECO:0007669"/>
    <property type="project" value="UniProtKB-SubCell"/>
</dbReference>
<keyword id="KW-0903">Direct protein sequencing</keyword>
<keyword id="KW-0256">Endoplasmic reticulum</keyword>
<keyword id="KW-0472">Membrane</keyword>
<keyword id="KW-0492">Microsome</keyword>
<keyword id="KW-1185">Reference proteome</keyword>
<protein>
    <recommendedName>
        <fullName>Putative 18 kDa spermidine-binding protein</fullName>
    </recommendedName>
</protein>
<feature type="chain" id="PRO_0000097600" description="Putative 18 kDa spermidine-binding protein">
    <location>
        <begin position="1"/>
        <end position="20" status="greater than"/>
    </location>
</feature>
<feature type="non-terminal residue">
    <location>
        <position position="20"/>
    </location>
</feature>
<comment type="function">
    <text>May have spermidine-binding activity.</text>
</comment>
<comment type="subunit">
    <text evidence="2">Dimer of 18 kDa and 60 kDa subunit.</text>
</comment>
<comment type="subcellular location">
    <subcellularLocation>
        <location evidence="1">Microsome membrane</location>
    </subcellularLocation>
    <subcellularLocation>
        <location evidence="1">Endoplasmic reticulum membrane</location>
    </subcellularLocation>
</comment>
<comment type="miscellaneous">
    <text>On the 2D-gel its MW is: 18 kDa.</text>
</comment>
<organism>
    <name type="scientific">Zea mays</name>
    <name type="common">Maize</name>
    <dbReference type="NCBI Taxonomy" id="4577"/>
    <lineage>
        <taxon>Eukaryota</taxon>
        <taxon>Viridiplantae</taxon>
        <taxon>Streptophyta</taxon>
        <taxon>Embryophyta</taxon>
        <taxon>Tracheophyta</taxon>
        <taxon>Spermatophyta</taxon>
        <taxon>Magnoliopsida</taxon>
        <taxon>Liliopsida</taxon>
        <taxon>Poales</taxon>
        <taxon>Poaceae</taxon>
        <taxon>PACMAD clade</taxon>
        <taxon>Panicoideae</taxon>
        <taxon>Andropogonodae</taxon>
        <taxon>Andropogoneae</taxon>
        <taxon>Tripsacinae</taxon>
        <taxon>Zea</taxon>
    </lineage>
</organism>
<accession>P82867</accession>